<protein>
    <recommendedName>
        <fullName evidence="1">Fumarate hydratase class II</fullName>
        <shortName evidence="1">Fumarase C</shortName>
        <ecNumber evidence="1">4.2.1.2</ecNumber>
    </recommendedName>
    <alternativeName>
        <fullName evidence="1">Aerobic fumarase</fullName>
    </alternativeName>
    <alternativeName>
        <fullName evidence="1">Iron-independent fumarase</fullName>
    </alternativeName>
</protein>
<organism>
    <name type="scientific">Xylella fastidiosa (strain 9a5c)</name>
    <dbReference type="NCBI Taxonomy" id="160492"/>
    <lineage>
        <taxon>Bacteria</taxon>
        <taxon>Pseudomonadati</taxon>
        <taxon>Pseudomonadota</taxon>
        <taxon>Gammaproteobacteria</taxon>
        <taxon>Lysobacterales</taxon>
        <taxon>Lysobacteraceae</taxon>
        <taxon>Xylella</taxon>
    </lineage>
</organism>
<evidence type="ECO:0000255" key="1">
    <source>
        <dbReference type="HAMAP-Rule" id="MF_00743"/>
    </source>
</evidence>
<name>FUMC_XYLFA</name>
<sequence>MEMQMSNSDRYRIEHDSMGDLRVPIDALWGAQTQRAIENFPISGRSMPQGFIHALGFIKAAAAKVNAELGLLPKPMAKEIEAAALDVAAGRYDADFPVDIYQTGSGTSSNMNANEVIATLAMRATKEPIHPNDHVNLGQSSNDVVPTAIRISATLAVQGRLLPALKHLRKMINKRARGLGSVVKTGRTHLMDAMPLTFAQEFGAWSAQIVSAEARLNDTLKRLHRLPLGGTAIGTGINTDPHFGRNAVKVLSALTGIHFESANNKFEGLAAQDDLVELSGQFNALAVALMKIANDLRWMNAGPLAGLGEIELPALQPGSSIMPGKVNPVIPEAVVMVASQVIGHHTAVTVAGQSGNFQLNVTLPLIAYNLLESATLLGNVVMLLADKVIVGLKVRQDRVQEVLERNPILVTALNPIIGYEKAAVIAKRAYKEHRPVLEVACEESNLNPVELARLLDPTALTEGGIYVVGGGGG</sequence>
<gene>
    <name evidence="1" type="primary">fumC</name>
    <name type="ordered locus">XF_1554</name>
</gene>
<comment type="function">
    <text evidence="1">Involved in the TCA cycle. Catalyzes the stereospecific interconversion of fumarate to L-malate.</text>
</comment>
<comment type="catalytic activity">
    <reaction evidence="1">
        <text>(S)-malate = fumarate + H2O</text>
        <dbReference type="Rhea" id="RHEA:12460"/>
        <dbReference type="ChEBI" id="CHEBI:15377"/>
        <dbReference type="ChEBI" id="CHEBI:15589"/>
        <dbReference type="ChEBI" id="CHEBI:29806"/>
        <dbReference type="EC" id="4.2.1.2"/>
    </reaction>
</comment>
<comment type="pathway">
    <text evidence="1">Carbohydrate metabolism; tricarboxylic acid cycle; (S)-malate from fumarate: step 1/1.</text>
</comment>
<comment type="subunit">
    <text evidence="1">Homotetramer.</text>
</comment>
<comment type="subcellular location">
    <subcellularLocation>
        <location evidence="1">Cytoplasm</location>
    </subcellularLocation>
</comment>
<comment type="miscellaneous">
    <text evidence="1">There are 2 substrate-binding sites: the catalytic A site, and the non-catalytic B site that may play a role in the transfer of substrate or product between the active site and the solvent. Alternatively, the B site may bind allosteric effectors.</text>
</comment>
<comment type="similarity">
    <text evidence="1">Belongs to the class-II fumarase/aspartase family. Fumarase subfamily.</text>
</comment>
<feature type="chain" id="PRO_0000161329" description="Fumarate hydratase class II">
    <location>
        <begin position="1"/>
        <end position="473"/>
    </location>
</feature>
<feature type="active site" description="Proton donor/acceptor" evidence="1">
    <location>
        <position position="189"/>
    </location>
</feature>
<feature type="active site" evidence="1">
    <location>
        <position position="319"/>
    </location>
</feature>
<feature type="binding site" evidence="1">
    <location>
        <begin position="105"/>
        <end position="107"/>
    </location>
    <ligand>
        <name>substrate</name>
    </ligand>
</feature>
<feature type="binding site" description="in site B" evidence="1">
    <location>
        <begin position="130"/>
        <end position="133"/>
    </location>
    <ligand>
        <name>substrate</name>
    </ligand>
</feature>
<feature type="binding site" evidence="1">
    <location>
        <begin position="140"/>
        <end position="142"/>
    </location>
    <ligand>
        <name>substrate</name>
    </ligand>
</feature>
<feature type="binding site" evidence="1">
    <location>
        <position position="188"/>
    </location>
    <ligand>
        <name>substrate</name>
    </ligand>
</feature>
<feature type="binding site" evidence="1">
    <location>
        <position position="320"/>
    </location>
    <ligand>
        <name>substrate</name>
    </ligand>
</feature>
<feature type="binding site" evidence="1">
    <location>
        <begin position="325"/>
        <end position="327"/>
    </location>
    <ligand>
        <name>substrate</name>
    </ligand>
</feature>
<feature type="site" description="Important for catalytic activity" evidence="1">
    <location>
        <position position="332"/>
    </location>
</feature>
<keyword id="KW-0963">Cytoplasm</keyword>
<keyword id="KW-0456">Lyase</keyword>
<keyword id="KW-0816">Tricarboxylic acid cycle</keyword>
<dbReference type="EC" id="4.2.1.2" evidence="1"/>
<dbReference type="EMBL" id="AE003849">
    <property type="protein sequence ID" value="AAF84363.1"/>
    <property type="molecule type" value="Genomic_DNA"/>
</dbReference>
<dbReference type="PIR" id="E82666">
    <property type="entry name" value="E82666"/>
</dbReference>
<dbReference type="SMR" id="Q9PD25"/>
<dbReference type="STRING" id="160492.XF_1554"/>
<dbReference type="KEGG" id="xfa:XF_1554"/>
<dbReference type="eggNOG" id="COG0114">
    <property type="taxonomic scope" value="Bacteria"/>
</dbReference>
<dbReference type="HOGENOM" id="CLU_021594_4_1_6"/>
<dbReference type="UniPathway" id="UPA00223">
    <property type="reaction ID" value="UER01007"/>
</dbReference>
<dbReference type="Proteomes" id="UP000000812">
    <property type="component" value="Chromosome"/>
</dbReference>
<dbReference type="GO" id="GO:0005737">
    <property type="term" value="C:cytoplasm"/>
    <property type="evidence" value="ECO:0007669"/>
    <property type="project" value="UniProtKB-SubCell"/>
</dbReference>
<dbReference type="GO" id="GO:0004333">
    <property type="term" value="F:fumarate hydratase activity"/>
    <property type="evidence" value="ECO:0007669"/>
    <property type="project" value="UniProtKB-UniRule"/>
</dbReference>
<dbReference type="GO" id="GO:0006106">
    <property type="term" value="P:fumarate metabolic process"/>
    <property type="evidence" value="ECO:0007669"/>
    <property type="project" value="InterPro"/>
</dbReference>
<dbReference type="GO" id="GO:0006099">
    <property type="term" value="P:tricarboxylic acid cycle"/>
    <property type="evidence" value="ECO:0007669"/>
    <property type="project" value="UniProtKB-UniRule"/>
</dbReference>
<dbReference type="CDD" id="cd01362">
    <property type="entry name" value="Fumarase_classII"/>
    <property type="match status" value="1"/>
</dbReference>
<dbReference type="FunFam" id="1.10.40.30:FF:000002">
    <property type="entry name" value="Fumarate hydratase class II"/>
    <property type="match status" value="1"/>
</dbReference>
<dbReference type="FunFam" id="1.10.275.10:FF:000001">
    <property type="entry name" value="Fumarate hydratase, mitochondrial"/>
    <property type="match status" value="1"/>
</dbReference>
<dbReference type="FunFam" id="1.20.200.10:FF:000001">
    <property type="entry name" value="Fumarate hydratase, mitochondrial"/>
    <property type="match status" value="1"/>
</dbReference>
<dbReference type="Gene3D" id="1.10.40.30">
    <property type="entry name" value="Fumarase/aspartase (C-terminal domain)"/>
    <property type="match status" value="1"/>
</dbReference>
<dbReference type="Gene3D" id="1.20.200.10">
    <property type="entry name" value="Fumarase/aspartase (Central domain)"/>
    <property type="match status" value="1"/>
</dbReference>
<dbReference type="Gene3D" id="1.10.275.10">
    <property type="entry name" value="Fumarase/aspartase (N-terminal domain)"/>
    <property type="match status" value="1"/>
</dbReference>
<dbReference type="HAMAP" id="MF_00743">
    <property type="entry name" value="FumaraseC"/>
    <property type="match status" value="1"/>
</dbReference>
<dbReference type="InterPro" id="IPR005677">
    <property type="entry name" value="Fum_hydII"/>
</dbReference>
<dbReference type="InterPro" id="IPR024083">
    <property type="entry name" value="Fumarase/histidase_N"/>
</dbReference>
<dbReference type="InterPro" id="IPR018951">
    <property type="entry name" value="Fumarase_C_C"/>
</dbReference>
<dbReference type="InterPro" id="IPR020557">
    <property type="entry name" value="Fumarate_lyase_CS"/>
</dbReference>
<dbReference type="InterPro" id="IPR000362">
    <property type="entry name" value="Fumarate_lyase_fam"/>
</dbReference>
<dbReference type="InterPro" id="IPR022761">
    <property type="entry name" value="Fumarate_lyase_N"/>
</dbReference>
<dbReference type="InterPro" id="IPR008948">
    <property type="entry name" value="L-Aspartase-like"/>
</dbReference>
<dbReference type="NCBIfam" id="NF008909">
    <property type="entry name" value="PRK12273.1"/>
    <property type="match status" value="1"/>
</dbReference>
<dbReference type="PANTHER" id="PTHR11444">
    <property type="entry name" value="ASPARTATEAMMONIA/ARGININOSUCCINATE/ADENYLOSUCCINATE LYASE"/>
    <property type="match status" value="1"/>
</dbReference>
<dbReference type="PANTHER" id="PTHR11444:SF22">
    <property type="entry name" value="FUMARATE HYDRATASE CLASS II"/>
    <property type="match status" value="1"/>
</dbReference>
<dbReference type="Pfam" id="PF10415">
    <property type="entry name" value="FumaraseC_C"/>
    <property type="match status" value="1"/>
</dbReference>
<dbReference type="Pfam" id="PF00206">
    <property type="entry name" value="Lyase_1"/>
    <property type="match status" value="1"/>
</dbReference>
<dbReference type="PRINTS" id="PR00145">
    <property type="entry name" value="ARGSUCLYASE"/>
</dbReference>
<dbReference type="PRINTS" id="PR00149">
    <property type="entry name" value="FUMRATELYASE"/>
</dbReference>
<dbReference type="SUPFAM" id="SSF48557">
    <property type="entry name" value="L-aspartase-like"/>
    <property type="match status" value="1"/>
</dbReference>
<dbReference type="PROSITE" id="PS00163">
    <property type="entry name" value="FUMARATE_LYASES"/>
    <property type="match status" value="1"/>
</dbReference>
<accession>Q9PD25</accession>
<reference key="1">
    <citation type="journal article" date="2000" name="Nature">
        <title>The genome sequence of the plant pathogen Xylella fastidiosa.</title>
        <authorList>
            <person name="Simpson A.J.G."/>
            <person name="Reinach F.C."/>
            <person name="Arruda P."/>
            <person name="Abreu F.A."/>
            <person name="Acencio M."/>
            <person name="Alvarenga R."/>
            <person name="Alves L.M.C."/>
            <person name="Araya J.E."/>
            <person name="Baia G.S."/>
            <person name="Baptista C.S."/>
            <person name="Barros M.H."/>
            <person name="Bonaccorsi E.D."/>
            <person name="Bordin S."/>
            <person name="Bove J.M."/>
            <person name="Briones M.R.S."/>
            <person name="Bueno M.R.P."/>
            <person name="Camargo A.A."/>
            <person name="Camargo L.E.A."/>
            <person name="Carraro D.M."/>
            <person name="Carrer H."/>
            <person name="Colauto N.B."/>
            <person name="Colombo C."/>
            <person name="Costa F.F."/>
            <person name="Costa M.C.R."/>
            <person name="Costa-Neto C.M."/>
            <person name="Coutinho L.L."/>
            <person name="Cristofani M."/>
            <person name="Dias-Neto E."/>
            <person name="Docena C."/>
            <person name="El-Dorry H."/>
            <person name="Facincani A.P."/>
            <person name="Ferreira A.J.S."/>
            <person name="Ferreira V.C.A."/>
            <person name="Ferro J.A."/>
            <person name="Fraga J.S."/>
            <person name="Franca S.C."/>
            <person name="Franco M.C."/>
            <person name="Frohme M."/>
            <person name="Furlan L.R."/>
            <person name="Garnier M."/>
            <person name="Goldman G.H."/>
            <person name="Goldman M.H.S."/>
            <person name="Gomes S.L."/>
            <person name="Gruber A."/>
            <person name="Ho P.L."/>
            <person name="Hoheisel J.D."/>
            <person name="Junqueira M.L."/>
            <person name="Kemper E.L."/>
            <person name="Kitajima J.P."/>
            <person name="Krieger J.E."/>
            <person name="Kuramae E.E."/>
            <person name="Laigret F."/>
            <person name="Lambais M.R."/>
            <person name="Leite L.C.C."/>
            <person name="Lemos E.G.M."/>
            <person name="Lemos M.V.F."/>
            <person name="Lopes S.A."/>
            <person name="Lopes C.R."/>
            <person name="Machado J.A."/>
            <person name="Machado M.A."/>
            <person name="Madeira A.M.B.N."/>
            <person name="Madeira H.M.F."/>
            <person name="Marino C.L."/>
            <person name="Marques M.V."/>
            <person name="Martins E.A.L."/>
            <person name="Martins E.M.F."/>
            <person name="Matsukuma A.Y."/>
            <person name="Menck C.F.M."/>
            <person name="Miracca E.C."/>
            <person name="Miyaki C.Y."/>
            <person name="Monteiro-Vitorello C.B."/>
            <person name="Moon D.H."/>
            <person name="Nagai M.A."/>
            <person name="Nascimento A.L.T.O."/>
            <person name="Netto L.E.S."/>
            <person name="Nhani A. Jr."/>
            <person name="Nobrega F.G."/>
            <person name="Nunes L.R."/>
            <person name="Oliveira M.A."/>
            <person name="de Oliveira M.C."/>
            <person name="de Oliveira R.C."/>
            <person name="Palmieri D.A."/>
            <person name="Paris A."/>
            <person name="Peixoto B.R."/>
            <person name="Pereira G.A.G."/>
            <person name="Pereira H.A. Jr."/>
            <person name="Pesquero J.B."/>
            <person name="Quaggio R.B."/>
            <person name="Roberto P.G."/>
            <person name="Rodrigues V."/>
            <person name="de Rosa A.J.M."/>
            <person name="de Rosa V.E. Jr."/>
            <person name="de Sa R.G."/>
            <person name="Santelli R.V."/>
            <person name="Sawasaki H.E."/>
            <person name="da Silva A.C.R."/>
            <person name="da Silva A.M."/>
            <person name="da Silva F.R."/>
            <person name="Silva W.A. Jr."/>
            <person name="da Silveira J.F."/>
            <person name="Silvestri M.L.Z."/>
            <person name="Siqueira W.J."/>
            <person name="de Souza A.A."/>
            <person name="de Souza A.P."/>
            <person name="Terenzi M.F."/>
            <person name="Truffi D."/>
            <person name="Tsai S.M."/>
            <person name="Tsuhako M.H."/>
            <person name="Vallada H."/>
            <person name="Van Sluys M.A."/>
            <person name="Verjovski-Almeida S."/>
            <person name="Vettore A.L."/>
            <person name="Zago M.A."/>
            <person name="Zatz M."/>
            <person name="Meidanis J."/>
            <person name="Setubal J.C."/>
        </authorList>
    </citation>
    <scope>NUCLEOTIDE SEQUENCE [LARGE SCALE GENOMIC DNA]</scope>
    <source>
        <strain>9a5c</strain>
    </source>
</reference>
<proteinExistence type="inferred from homology"/>